<evidence type="ECO:0000250" key="1"/>
<evidence type="ECO:0000255" key="2">
    <source>
        <dbReference type="HAMAP-Rule" id="MF_01289"/>
    </source>
</evidence>
<keyword id="KW-0456">Lyase</keyword>
<keyword id="KW-0460">Magnesium</keyword>
<keyword id="KW-0479">Metal-binding</keyword>
<keyword id="KW-1185">Reference proteome</keyword>
<sequence length="382" mass="41929">MKITRLTTYHAAPRWLFLKVETDEGITGWGEPVIEGRARSVEAAVHELAGYVVGKDPARINDLWQTMYRAGFYRGGAILMSAIAGIDQALWDIKGKALGVPVYELLGGLVRDRMKTYRWVGGDRPGAIIAQINDYRALGFDTFKFNGTEEMKLIDSARAVDAAVVKVAEIRETFGNSIDFGIDFHGRVGAPMAKALLRELEPFKPLFVEEPVLAEQAEYYPRLAASTCIPLAAGERMFSRFEFKNVLCAGGIGMVQPDLSHAGGITECVKIAAMAEAYDVGFAPHCPLGPIALAACLHVDFVSHNAVLQEQSIGIHYNEGADLLDYVINKEDFHCVDGSIAALPKPGLGVEINEDMLKRANENPPDWRNPVWRHADGSIAEW</sequence>
<organism>
    <name type="scientific">Xanthomonas campestris pv. campestris (strain ATCC 33913 / DSM 3586 / NCPPB 528 / LMG 568 / P 25)</name>
    <dbReference type="NCBI Taxonomy" id="190485"/>
    <lineage>
        <taxon>Bacteria</taxon>
        <taxon>Pseudomonadati</taxon>
        <taxon>Pseudomonadota</taxon>
        <taxon>Gammaproteobacteria</taxon>
        <taxon>Lysobacterales</taxon>
        <taxon>Lysobacteraceae</taxon>
        <taxon>Xanthomonas</taxon>
    </lineage>
</organism>
<comment type="function">
    <text evidence="2">Catalyzes the dehydration of D-galactonate to 2-keto-3-deoxy-D-galactonate.</text>
</comment>
<comment type="catalytic activity">
    <reaction evidence="2">
        <text>D-galactonate = 2-dehydro-3-deoxy-D-galactonate + H2O</text>
        <dbReference type="Rhea" id="RHEA:18649"/>
        <dbReference type="ChEBI" id="CHEBI:12931"/>
        <dbReference type="ChEBI" id="CHEBI:15377"/>
        <dbReference type="ChEBI" id="CHEBI:57989"/>
        <dbReference type="EC" id="4.2.1.6"/>
    </reaction>
</comment>
<comment type="cofactor">
    <cofactor evidence="2">
        <name>Mg(2+)</name>
        <dbReference type="ChEBI" id="CHEBI:18420"/>
    </cofactor>
    <text evidence="2">Binds 1 Mg(2+) ion per subunit.</text>
</comment>
<comment type="pathway">
    <text evidence="2">Carbohydrate acid metabolism; D-galactonate degradation; D-glyceraldehyde 3-phosphate and pyruvate from D-galactonate: step 1/3.</text>
</comment>
<comment type="miscellaneous">
    <text evidence="2">Reaction proceeds via an anti dehydration.</text>
</comment>
<comment type="similarity">
    <text evidence="2">Belongs to the mandelate racemase/muconate lactonizing enzyme family. GalD subfamily.</text>
</comment>
<proteinExistence type="inferred from homology"/>
<protein>
    <recommendedName>
        <fullName evidence="2">D-galactonate dehydratase</fullName>
        <shortName evidence="2">GalD</shortName>
        <ecNumber evidence="2">4.2.1.6</ecNumber>
    </recommendedName>
</protein>
<accession>Q8P9V1</accession>
<name>DGOD_XANCP</name>
<feature type="chain" id="PRO_0000352639" description="D-galactonate dehydratase">
    <location>
        <begin position="1"/>
        <end position="382"/>
    </location>
</feature>
<feature type="active site" description="Proton donor" evidence="1">
    <location>
        <position position="185"/>
    </location>
</feature>
<feature type="active site" description="Proton acceptor" evidence="1">
    <location>
        <position position="285"/>
    </location>
</feature>
<feature type="binding site" evidence="2">
    <location>
        <position position="183"/>
    </location>
    <ligand>
        <name>Mg(2+)</name>
        <dbReference type="ChEBI" id="CHEBI:18420"/>
    </ligand>
</feature>
<feature type="binding site" evidence="2">
    <location>
        <position position="209"/>
    </location>
    <ligand>
        <name>Mg(2+)</name>
        <dbReference type="ChEBI" id="CHEBI:18420"/>
    </ligand>
</feature>
<feature type="binding site" evidence="2">
    <location>
        <position position="235"/>
    </location>
    <ligand>
        <name>Mg(2+)</name>
        <dbReference type="ChEBI" id="CHEBI:18420"/>
    </ligand>
</feature>
<feature type="site" description="Increases basicity of active site His" evidence="2">
    <location>
        <position position="258"/>
    </location>
</feature>
<feature type="site" description="Transition state stabilizer" evidence="2">
    <location>
        <position position="310"/>
    </location>
</feature>
<reference key="1">
    <citation type="journal article" date="2002" name="Nature">
        <title>Comparison of the genomes of two Xanthomonas pathogens with differing host specificities.</title>
        <authorList>
            <person name="da Silva A.C.R."/>
            <person name="Ferro J.A."/>
            <person name="Reinach F.C."/>
            <person name="Farah C.S."/>
            <person name="Furlan L.R."/>
            <person name="Quaggio R.B."/>
            <person name="Monteiro-Vitorello C.B."/>
            <person name="Van Sluys M.A."/>
            <person name="Almeida N.F. Jr."/>
            <person name="Alves L.M.C."/>
            <person name="do Amaral A.M."/>
            <person name="Bertolini M.C."/>
            <person name="Camargo L.E.A."/>
            <person name="Camarotte G."/>
            <person name="Cannavan F."/>
            <person name="Cardozo J."/>
            <person name="Chambergo F."/>
            <person name="Ciapina L.P."/>
            <person name="Cicarelli R.M.B."/>
            <person name="Coutinho L.L."/>
            <person name="Cursino-Santos J.R."/>
            <person name="El-Dorry H."/>
            <person name="Faria J.B."/>
            <person name="Ferreira A.J.S."/>
            <person name="Ferreira R.C.C."/>
            <person name="Ferro M.I.T."/>
            <person name="Formighieri E.F."/>
            <person name="Franco M.C."/>
            <person name="Greggio C.C."/>
            <person name="Gruber A."/>
            <person name="Katsuyama A.M."/>
            <person name="Kishi L.T."/>
            <person name="Leite R.P."/>
            <person name="Lemos E.G.M."/>
            <person name="Lemos M.V.F."/>
            <person name="Locali E.C."/>
            <person name="Machado M.A."/>
            <person name="Madeira A.M.B.N."/>
            <person name="Martinez-Rossi N.M."/>
            <person name="Martins E.C."/>
            <person name="Meidanis J."/>
            <person name="Menck C.F.M."/>
            <person name="Miyaki C.Y."/>
            <person name="Moon D.H."/>
            <person name="Moreira L.M."/>
            <person name="Novo M.T.M."/>
            <person name="Okura V.K."/>
            <person name="Oliveira M.C."/>
            <person name="Oliveira V.R."/>
            <person name="Pereira H.A."/>
            <person name="Rossi A."/>
            <person name="Sena J.A.D."/>
            <person name="Silva C."/>
            <person name="de Souza R.F."/>
            <person name="Spinola L.A.F."/>
            <person name="Takita M.A."/>
            <person name="Tamura R.E."/>
            <person name="Teixeira E.C."/>
            <person name="Tezza R.I.D."/>
            <person name="Trindade dos Santos M."/>
            <person name="Truffi D."/>
            <person name="Tsai S.M."/>
            <person name="White F.F."/>
            <person name="Setubal J.C."/>
            <person name="Kitajima J.P."/>
        </authorList>
    </citation>
    <scope>NUCLEOTIDE SEQUENCE [LARGE SCALE GENOMIC DNA]</scope>
    <source>
        <strain>ATCC 33913 / DSM 3586 / NCPPB 528 / LMG 568 / P 25</strain>
    </source>
</reference>
<dbReference type="EC" id="4.2.1.6" evidence="2"/>
<dbReference type="EMBL" id="AE008922">
    <property type="protein sequence ID" value="AAM41037.1"/>
    <property type="molecule type" value="Genomic_DNA"/>
</dbReference>
<dbReference type="RefSeq" id="NP_637113.1">
    <property type="nucleotide sequence ID" value="NC_003902.1"/>
</dbReference>
<dbReference type="RefSeq" id="WP_011036920.1">
    <property type="nucleotide sequence ID" value="NC_003902.1"/>
</dbReference>
<dbReference type="SMR" id="Q8P9V1"/>
<dbReference type="STRING" id="190485.XCC1746"/>
<dbReference type="EnsemblBacteria" id="AAM41037">
    <property type="protein sequence ID" value="AAM41037"/>
    <property type="gene ID" value="XCC1746"/>
</dbReference>
<dbReference type="GeneID" id="58013700"/>
<dbReference type="KEGG" id="xcc:XCC1746"/>
<dbReference type="PATRIC" id="fig|190485.4.peg.1861"/>
<dbReference type="eggNOG" id="COG4948">
    <property type="taxonomic scope" value="Bacteria"/>
</dbReference>
<dbReference type="HOGENOM" id="CLU_030273_3_2_6"/>
<dbReference type="OrthoDB" id="103536at2"/>
<dbReference type="UniPathway" id="UPA00081">
    <property type="reaction ID" value="UER00518"/>
</dbReference>
<dbReference type="Proteomes" id="UP000001010">
    <property type="component" value="Chromosome"/>
</dbReference>
<dbReference type="GO" id="GO:0008869">
    <property type="term" value="F:galactonate dehydratase activity"/>
    <property type="evidence" value="ECO:0007669"/>
    <property type="project" value="UniProtKB-UniRule"/>
</dbReference>
<dbReference type="GO" id="GO:0016836">
    <property type="term" value="F:hydro-lyase activity"/>
    <property type="evidence" value="ECO:0000318"/>
    <property type="project" value="GO_Central"/>
</dbReference>
<dbReference type="GO" id="GO:0000287">
    <property type="term" value="F:magnesium ion binding"/>
    <property type="evidence" value="ECO:0007669"/>
    <property type="project" value="UniProtKB-UniRule"/>
</dbReference>
<dbReference type="GO" id="GO:0009063">
    <property type="term" value="P:amino acid catabolic process"/>
    <property type="evidence" value="ECO:0007669"/>
    <property type="project" value="InterPro"/>
</dbReference>
<dbReference type="GO" id="GO:0034194">
    <property type="term" value="P:D-galactonate catabolic process"/>
    <property type="evidence" value="ECO:0000318"/>
    <property type="project" value="GO_Central"/>
</dbReference>
<dbReference type="CDD" id="cd03325">
    <property type="entry name" value="D-galactonate_dehydratase"/>
    <property type="match status" value="1"/>
</dbReference>
<dbReference type="FunFam" id="3.30.390.10:FF:000003">
    <property type="entry name" value="D-galactonate dehydratase"/>
    <property type="match status" value="1"/>
</dbReference>
<dbReference type="Gene3D" id="3.20.20.120">
    <property type="entry name" value="Enolase-like C-terminal domain"/>
    <property type="match status" value="1"/>
</dbReference>
<dbReference type="Gene3D" id="3.30.390.10">
    <property type="entry name" value="Enolase-like, N-terminal domain"/>
    <property type="match status" value="1"/>
</dbReference>
<dbReference type="HAMAP" id="MF_01289">
    <property type="entry name" value="Galacton_dehydrat"/>
    <property type="match status" value="1"/>
</dbReference>
<dbReference type="InterPro" id="IPR034593">
    <property type="entry name" value="DgoD-like"/>
</dbReference>
<dbReference type="InterPro" id="IPR036849">
    <property type="entry name" value="Enolase-like_C_sf"/>
</dbReference>
<dbReference type="InterPro" id="IPR029017">
    <property type="entry name" value="Enolase-like_N"/>
</dbReference>
<dbReference type="InterPro" id="IPR029065">
    <property type="entry name" value="Enolase_C-like"/>
</dbReference>
<dbReference type="InterPro" id="IPR023592">
    <property type="entry name" value="Galactonate_deHydtase"/>
</dbReference>
<dbReference type="InterPro" id="IPR018110">
    <property type="entry name" value="Mandel_Rmase/mucon_lact_enz_CS"/>
</dbReference>
<dbReference type="InterPro" id="IPR013342">
    <property type="entry name" value="Mandelate_racemase_C"/>
</dbReference>
<dbReference type="InterPro" id="IPR013341">
    <property type="entry name" value="Mandelate_racemase_N_dom"/>
</dbReference>
<dbReference type="NCBIfam" id="NF010624">
    <property type="entry name" value="PRK14017.1"/>
    <property type="match status" value="1"/>
</dbReference>
<dbReference type="PANTHER" id="PTHR48080:SF2">
    <property type="entry name" value="D-GALACTONATE DEHYDRATASE"/>
    <property type="match status" value="1"/>
</dbReference>
<dbReference type="PANTHER" id="PTHR48080">
    <property type="entry name" value="D-GALACTONATE DEHYDRATASE-RELATED"/>
    <property type="match status" value="1"/>
</dbReference>
<dbReference type="Pfam" id="PF13378">
    <property type="entry name" value="MR_MLE_C"/>
    <property type="match status" value="1"/>
</dbReference>
<dbReference type="Pfam" id="PF02746">
    <property type="entry name" value="MR_MLE_N"/>
    <property type="match status" value="1"/>
</dbReference>
<dbReference type="SFLD" id="SFLDF00003">
    <property type="entry name" value="D-galactonate_dehydratase"/>
    <property type="match status" value="1"/>
</dbReference>
<dbReference type="SFLD" id="SFLDS00001">
    <property type="entry name" value="Enolase"/>
    <property type="match status" value="1"/>
</dbReference>
<dbReference type="SMART" id="SM00922">
    <property type="entry name" value="MR_MLE"/>
    <property type="match status" value="1"/>
</dbReference>
<dbReference type="SUPFAM" id="SSF51604">
    <property type="entry name" value="Enolase C-terminal domain-like"/>
    <property type="match status" value="1"/>
</dbReference>
<dbReference type="SUPFAM" id="SSF54826">
    <property type="entry name" value="Enolase N-terminal domain-like"/>
    <property type="match status" value="1"/>
</dbReference>
<dbReference type="PROSITE" id="PS00908">
    <property type="entry name" value="MR_MLE_1"/>
    <property type="match status" value="1"/>
</dbReference>
<dbReference type="PROSITE" id="PS00909">
    <property type="entry name" value="MR_MLE_2"/>
    <property type="match status" value="1"/>
</dbReference>
<gene>
    <name evidence="2" type="primary">dgoD</name>
    <name type="ordered locus">XCC1746</name>
</gene>